<comment type="function">
    <text evidence="1">Cell wall formation.</text>
</comment>
<comment type="catalytic activity">
    <reaction evidence="1">
        <text>UDP-N-acetyl-alpha-D-muramate + L-alanine + ATP = UDP-N-acetyl-alpha-D-muramoyl-L-alanine + ADP + phosphate + H(+)</text>
        <dbReference type="Rhea" id="RHEA:23372"/>
        <dbReference type="ChEBI" id="CHEBI:15378"/>
        <dbReference type="ChEBI" id="CHEBI:30616"/>
        <dbReference type="ChEBI" id="CHEBI:43474"/>
        <dbReference type="ChEBI" id="CHEBI:57972"/>
        <dbReference type="ChEBI" id="CHEBI:70757"/>
        <dbReference type="ChEBI" id="CHEBI:83898"/>
        <dbReference type="ChEBI" id="CHEBI:456216"/>
        <dbReference type="EC" id="6.3.2.8"/>
    </reaction>
</comment>
<comment type="pathway">
    <text evidence="1">Cell wall biogenesis; peptidoglycan biosynthesis.</text>
</comment>
<comment type="subcellular location">
    <subcellularLocation>
        <location evidence="1">Cytoplasm</location>
    </subcellularLocation>
</comment>
<comment type="similarity">
    <text evidence="1">Belongs to the MurCDEF family.</text>
</comment>
<keyword id="KW-0067">ATP-binding</keyword>
<keyword id="KW-0131">Cell cycle</keyword>
<keyword id="KW-0132">Cell division</keyword>
<keyword id="KW-0133">Cell shape</keyword>
<keyword id="KW-0961">Cell wall biogenesis/degradation</keyword>
<keyword id="KW-0963">Cytoplasm</keyword>
<keyword id="KW-0436">Ligase</keyword>
<keyword id="KW-0547">Nucleotide-binding</keyword>
<keyword id="KW-0573">Peptidoglycan synthesis</keyword>
<protein>
    <recommendedName>
        <fullName evidence="1">UDP-N-acetylmuramate--L-alanine ligase</fullName>
        <ecNumber evidence="1">6.3.2.8</ecNumber>
    </recommendedName>
    <alternativeName>
        <fullName evidence="1">UDP-N-acetylmuramoyl-L-alanine synthetase</fullName>
    </alternativeName>
</protein>
<accession>Q0SM34</accession>
<accession>G0IRZ9</accession>
<organism>
    <name type="scientific">Borreliella afzelii (strain PKo)</name>
    <name type="common">Borrelia afzelii</name>
    <dbReference type="NCBI Taxonomy" id="390236"/>
    <lineage>
        <taxon>Bacteria</taxon>
        <taxon>Pseudomonadati</taxon>
        <taxon>Spirochaetota</taxon>
        <taxon>Spirochaetia</taxon>
        <taxon>Spirochaetales</taxon>
        <taxon>Borreliaceae</taxon>
        <taxon>Borreliella</taxon>
    </lineage>
</organism>
<evidence type="ECO:0000255" key="1">
    <source>
        <dbReference type="HAMAP-Rule" id="MF_00046"/>
    </source>
</evidence>
<name>MURC_BORAP</name>
<dbReference type="EC" id="6.3.2.8" evidence="1"/>
<dbReference type="EMBL" id="CP000395">
    <property type="protein sequence ID" value="ABH02094.1"/>
    <property type="molecule type" value="Genomic_DNA"/>
</dbReference>
<dbReference type="EMBL" id="CP002933">
    <property type="protein sequence ID" value="AEL70034.1"/>
    <property type="molecule type" value="Genomic_DNA"/>
</dbReference>
<dbReference type="RefSeq" id="WP_004789707.1">
    <property type="nucleotide sequence ID" value="NZ_CP160066.1"/>
</dbReference>
<dbReference type="SMR" id="Q0SM34"/>
<dbReference type="STRING" id="29518.BLA32_00135"/>
<dbReference type="KEGG" id="baf:BAPKO_0870"/>
<dbReference type="KEGG" id="bafz:BafPKo_0845"/>
<dbReference type="PATRIC" id="fig|390236.22.peg.806"/>
<dbReference type="eggNOG" id="COG0773">
    <property type="taxonomic scope" value="Bacteria"/>
</dbReference>
<dbReference type="HOGENOM" id="CLU_028104_2_1_12"/>
<dbReference type="OrthoDB" id="9804126at2"/>
<dbReference type="UniPathway" id="UPA00219"/>
<dbReference type="Proteomes" id="UP000005216">
    <property type="component" value="Chromosome"/>
</dbReference>
<dbReference type="GO" id="GO:0005737">
    <property type="term" value="C:cytoplasm"/>
    <property type="evidence" value="ECO:0007669"/>
    <property type="project" value="UniProtKB-SubCell"/>
</dbReference>
<dbReference type="GO" id="GO:0005524">
    <property type="term" value="F:ATP binding"/>
    <property type="evidence" value="ECO:0007669"/>
    <property type="project" value="UniProtKB-UniRule"/>
</dbReference>
<dbReference type="GO" id="GO:0008763">
    <property type="term" value="F:UDP-N-acetylmuramate-L-alanine ligase activity"/>
    <property type="evidence" value="ECO:0007669"/>
    <property type="project" value="UniProtKB-UniRule"/>
</dbReference>
<dbReference type="GO" id="GO:0051301">
    <property type="term" value="P:cell division"/>
    <property type="evidence" value="ECO:0007669"/>
    <property type="project" value="UniProtKB-KW"/>
</dbReference>
<dbReference type="GO" id="GO:0071555">
    <property type="term" value="P:cell wall organization"/>
    <property type="evidence" value="ECO:0007669"/>
    <property type="project" value="UniProtKB-KW"/>
</dbReference>
<dbReference type="GO" id="GO:0009252">
    <property type="term" value="P:peptidoglycan biosynthetic process"/>
    <property type="evidence" value="ECO:0007669"/>
    <property type="project" value="UniProtKB-UniRule"/>
</dbReference>
<dbReference type="GO" id="GO:0008360">
    <property type="term" value="P:regulation of cell shape"/>
    <property type="evidence" value="ECO:0007669"/>
    <property type="project" value="UniProtKB-KW"/>
</dbReference>
<dbReference type="Gene3D" id="3.90.190.20">
    <property type="entry name" value="Mur ligase, C-terminal domain"/>
    <property type="match status" value="1"/>
</dbReference>
<dbReference type="Gene3D" id="3.40.1190.10">
    <property type="entry name" value="Mur-like, catalytic domain"/>
    <property type="match status" value="1"/>
</dbReference>
<dbReference type="Gene3D" id="3.40.50.720">
    <property type="entry name" value="NAD(P)-binding Rossmann-like Domain"/>
    <property type="match status" value="1"/>
</dbReference>
<dbReference type="HAMAP" id="MF_00046">
    <property type="entry name" value="MurC"/>
    <property type="match status" value="1"/>
</dbReference>
<dbReference type="InterPro" id="IPR036565">
    <property type="entry name" value="Mur-like_cat_sf"/>
</dbReference>
<dbReference type="InterPro" id="IPR004101">
    <property type="entry name" value="Mur_ligase_C"/>
</dbReference>
<dbReference type="InterPro" id="IPR036615">
    <property type="entry name" value="Mur_ligase_C_dom_sf"/>
</dbReference>
<dbReference type="InterPro" id="IPR013221">
    <property type="entry name" value="Mur_ligase_cen"/>
</dbReference>
<dbReference type="InterPro" id="IPR000713">
    <property type="entry name" value="Mur_ligase_N"/>
</dbReference>
<dbReference type="InterPro" id="IPR050061">
    <property type="entry name" value="MurCDEF_pg_biosynth"/>
</dbReference>
<dbReference type="InterPro" id="IPR005758">
    <property type="entry name" value="UDP-N-AcMur_Ala_ligase_MurC"/>
</dbReference>
<dbReference type="NCBIfam" id="TIGR01082">
    <property type="entry name" value="murC"/>
    <property type="match status" value="1"/>
</dbReference>
<dbReference type="PANTHER" id="PTHR43445:SF3">
    <property type="entry name" value="UDP-N-ACETYLMURAMATE--L-ALANINE LIGASE"/>
    <property type="match status" value="1"/>
</dbReference>
<dbReference type="PANTHER" id="PTHR43445">
    <property type="entry name" value="UDP-N-ACETYLMURAMATE--L-ALANINE LIGASE-RELATED"/>
    <property type="match status" value="1"/>
</dbReference>
<dbReference type="Pfam" id="PF01225">
    <property type="entry name" value="Mur_ligase"/>
    <property type="match status" value="1"/>
</dbReference>
<dbReference type="Pfam" id="PF02875">
    <property type="entry name" value="Mur_ligase_C"/>
    <property type="match status" value="1"/>
</dbReference>
<dbReference type="Pfam" id="PF08245">
    <property type="entry name" value="Mur_ligase_M"/>
    <property type="match status" value="1"/>
</dbReference>
<dbReference type="SUPFAM" id="SSF51984">
    <property type="entry name" value="MurCD N-terminal domain"/>
    <property type="match status" value="1"/>
</dbReference>
<dbReference type="SUPFAM" id="SSF53623">
    <property type="entry name" value="MurD-like peptide ligases, catalytic domain"/>
    <property type="match status" value="1"/>
</dbReference>
<dbReference type="SUPFAM" id="SSF53244">
    <property type="entry name" value="MurD-like peptide ligases, peptide-binding domain"/>
    <property type="match status" value="1"/>
</dbReference>
<sequence length="468" mass="53553">MKVDFDSLNNIFFVGIKGSGVCSLACFLNSKGYFVEGVDVSDKFHTDKILSNNKISYYENIYEFSLKELGRSFDLIVYSSAYDKYGLPALLEAKELNIPILSYSEVLGELSRKYYSVGIAGSHGKTTTTAFLGLLFNKLGLNPNVIVGSSVKDFGDNSAIAGISNIFIAETCEYKKHFLHFSPNMLILTNIDYEHVDFFENYEALEDAFLQYINNLKKNGILIINSDDNNLLKIKRQINRKDINIFSFGSKDLSNFQISNIVVKNEYFCFSFLGLCNVELRTVLFHNVLNFSAALLALNLFLESNGKSIFDFEEAVKKIAKNYSGIKRRVEVVKEKKGVIYMDDYAHHPREIRDTLLGIKDFYKNKRIILDFMPHTFTRTKEFFNDFVEVLSVADILILHNIYLSNRENFNPDELSVKLFLNIKKINKNTYFFKDVKDSVEFIKSLLISGDLFITMGAGNNFILHDFL</sequence>
<reference key="1">
    <citation type="journal article" date="2006" name="BMC Genomics">
        <title>Comparative genome analysis: selection pressure on the Borrelia vls cassettes is essential for infectivity.</title>
        <authorList>
            <person name="Gloeckner G."/>
            <person name="Schulte-Spechtel U."/>
            <person name="Schilhabel M."/>
            <person name="Felder M."/>
            <person name="Suehnel J."/>
            <person name="Wilske B."/>
            <person name="Platzer M."/>
        </authorList>
    </citation>
    <scope>NUCLEOTIDE SEQUENCE [LARGE SCALE GENOMIC DNA]</scope>
    <source>
        <strain>PKo</strain>
    </source>
</reference>
<reference key="2">
    <citation type="journal article" date="2011" name="J. Bacteriol.">
        <title>Whole-genome sequences of two Borrelia afzelii and two Borrelia garinii Lyme disease agent isolates.</title>
        <authorList>
            <person name="Casjens S.R."/>
            <person name="Mongodin E.F."/>
            <person name="Qiu W.G."/>
            <person name="Dunn J.J."/>
            <person name="Luft B.J."/>
            <person name="Fraser-Liggett C.M."/>
            <person name="Schutzer S.E."/>
        </authorList>
    </citation>
    <scope>NUCLEOTIDE SEQUENCE [LARGE SCALE GENOMIC DNA]</scope>
    <source>
        <strain>PKo</strain>
    </source>
</reference>
<gene>
    <name evidence="1" type="primary">murC</name>
    <name type="ordered locus">BAPKO_0870</name>
    <name type="ordered locus">BafPKo_0845</name>
</gene>
<proteinExistence type="inferred from homology"/>
<feature type="chain" id="PRO_0000336817" description="UDP-N-acetylmuramate--L-alanine ligase">
    <location>
        <begin position="1"/>
        <end position="468"/>
    </location>
</feature>
<feature type="binding site" evidence="1">
    <location>
        <begin position="121"/>
        <end position="127"/>
    </location>
    <ligand>
        <name>ATP</name>
        <dbReference type="ChEBI" id="CHEBI:30616"/>
    </ligand>
</feature>